<dbReference type="EC" id="6.3.2.4" evidence="2"/>
<dbReference type="EMBL" id="CP001048">
    <property type="protein sequence ID" value="ACC87701.1"/>
    <property type="molecule type" value="Genomic_DNA"/>
</dbReference>
<dbReference type="RefSeq" id="WP_002210432.1">
    <property type="nucleotide sequence ID" value="NZ_CP009780.1"/>
</dbReference>
<dbReference type="SMR" id="B2K4E8"/>
<dbReference type="KEGG" id="ypb:YPTS_0717"/>
<dbReference type="PATRIC" id="fig|502801.10.peg.48"/>
<dbReference type="UniPathway" id="UPA00219"/>
<dbReference type="GO" id="GO:0005829">
    <property type="term" value="C:cytosol"/>
    <property type="evidence" value="ECO:0007669"/>
    <property type="project" value="TreeGrafter"/>
</dbReference>
<dbReference type="GO" id="GO:0005524">
    <property type="term" value="F:ATP binding"/>
    <property type="evidence" value="ECO:0007669"/>
    <property type="project" value="UniProtKB-KW"/>
</dbReference>
<dbReference type="GO" id="GO:0008716">
    <property type="term" value="F:D-alanine-D-alanine ligase activity"/>
    <property type="evidence" value="ECO:0007669"/>
    <property type="project" value="UniProtKB-UniRule"/>
</dbReference>
<dbReference type="GO" id="GO:0046872">
    <property type="term" value="F:metal ion binding"/>
    <property type="evidence" value="ECO:0007669"/>
    <property type="project" value="UniProtKB-KW"/>
</dbReference>
<dbReference type="GO" id="GO:0071555">
    <property type="term" value="P:cell wall organization"/>
    <property type="evidence" value="ECO:0007669"/>
    <property type="project" value="UniProtKB-KW"/>
</dbReference>
<dbReference type="GO" id="GO:0009252">
    <property type="term" value="P:peptidoglycan biosynthetic process"/>
    <property type="evidence" value="ECO:0007669"/>
    <property type="project" value="UniProtKB-UniRule"/>
</dbReference>
<dbReference type="GO" id="GO:0008360">
    <property type="term" value="P:regulation of cell shape"/>
    <property type="evidence" value="ECO:0007669"/>
    <property type="project" value="UniProtKB-KW"/>
</dbReference>
<dbReference type="FunFam" id="3.30.1490.20:FF:000007">
    <property type="entry name" value="D-alanine--D-alanine ligase"/>
    <property type="match status" value="1"/>
</dbReference>
<dbReference type="FunFam" id="3.30.470.20:FF:000008">
    <property type="entry name" value="D-alanine--D-alanine ligase"/>
    <property type="match status" value="1"/>
</dbReference>
<dbReference type="FunFam" id="3.40.50.20:FF:000013">
    <property type="entry name" value="D-alanine--D-alanine ligase"/>
    <property type="match status" value="1"/>
</dbReference>
<dbReference type="Gene3D" id="3.40.50.20">
    <property type="match status" value="1"/>
</dbReference>
<dbReference type="Gene3D" id="3.30.1490.20">
    <property type="entry name" value="ATP-grasp fold, A domain"/>
    <property type="match status" value="1"/>
</dbReference>
<dbReference type="Gene3D" id="3.30.470.20">
    <property type="entry name" value="ATP-grasp fold, B domain"/>
    <property type="match status" value="1"/>
</dbReference>
<dbReference type="HAMAP" id="MF_00047">
    <property type="entry name" value="Dala_Dala_lig"/>
    <property type="match status" value="1"/>
</dbReference>
<dbReference type="InterPro" id="IPR011761">
    <property type="entry name" value="ATP-grasp"/>
</dbReference>
<dbReference type="InterPro" id="IPR013815">
    <property type="entry name" value="ATP_grasp_subdomain_1"/>
</dbReference>
<dbReference type="InterPro" id="IPR000291">
    <property type="entry name" value="D-Ala_lig_Van_CS"/>
</dbReference>
<dbReference type="InterPro" id="IPR005905">
    <property type="entry name" value="D_ala_D_ala"/>
</dbReference>
<dbReference type="InterPro" id="IPR011095">
    <property type="entry name" value="Dala_Dala_lig_C"/>
</dbReference>
<dbReference type="InterPro" id="IPR011127">
    <property type="entry name" value="Dala_Dala_lig_N"/>
</dbReference>
<dbReference type="InterPro" id="IPR016185">
    <property type="entry name" value="PreATP-grasp_dom_sf"/>
</dbReference>
<dbReference type="NCBIfam" id="TIGR01205">
    <property type="entry name" value="D_ala_D_alaTIGR"/>
    <property type="match status" value="1"/>
</dbReference>
<dbReference type="NCBIfam" id="NF002378">
    <property type="entry name" value="PRK01372.1"/>
    <property type="match status" value="1"/>
</dbReference>
<dbReference type="PANTHER" id="PTHR23132">
    <property type="entry name" value="D-ALANINE--D-ALANINE LIGASE"/>
    <property type="match status" value="1"/>
</dbReference>
<dbReference type="PANTHER" id="PTHR23132:SF23">
    <property type="entry name" value="D-ALANINE--D-ALANINE LIGASE B"/>
    <property type="match status" value="1"/>
</dbReference>
<dbReference type="Pfam" id="PF07478">
    <property type="entry name" value="Dala_Dala_lig_C"/>
    <property type="match status" value="1"/>
</dbReference>
<dbReference type="Pfam" id="PF01820">
    <property type="entry name" value="Dala_Dala_lig_N"/>
    <property type="match status" value="1"/>
</dbReference>
<dbReference type="PIRSF" id="PIRSF039102">
    <property type="entry name" value="Ddl/VanB"/>
    <property type="match status" value="1"/>
</dbReference>
<dbReference type="SUPFAM" id="SSF56059">
    <property type="entry name" value="Glutathione synthetase ATP-binding domain-like"/>
    <property type="match status" value="1"/>
</dbReference>
<dbReference type="SUPFAM" id="SSF52440">
    <property type="entry name" value="PreATP-grasp domain"/>
    <property type="match status" value="1"/>
</dbReference>
<dbReference type="PROSITE" id="PS50975">
    <property type="entry name" value="ATP_GRASP"/>
    <property type="match status" value="1"/>
</dbReference>
<dbReference type="PROSITE" id="PS00843">
    <property type="entry name" value="DALA_DALA_LIGASE_1"/>
    <property type="match status" value="1"/>
</dbReference>
<dbReference type="PROSITE" id="PS00844">
    <property type="entry name" value="DALA_DALA_LIGASE_2"/>
    <property type="match status" value="1"/>
</dbReference>
<keyword id="KW-0067">ATP-binding</keyword>
<keyword id="KW-0133">Cell shape</keyword>
<keyword id="KW-0961">Cell wall biogenesis/degradation</keyword>
<keyword id="KW-0963">Cytoplasm</keyword>
<keyword id="KW-0436">Ligase</keyword>
<keyword id="KW-0460">Magnesium</keyword>
<keyword id="KW-0464">Manganese</keyword>
<keyword id="KW-0479">Metal-binding</keyword>
<keyword id="KW-0547">Nucleotide-binding</keyword>
<keyword id="KW-0573">Peptidoglycan synthesis</keyword>
<protein>
    <recommendedName>
        <fullName evidence="2">D-alanine--D-alanine ligase</fullName>
        <ecNumber evidence="2">6.3.2.4</ecNumber>
    </recommendedName>
    <alternativeName>
        <fullName evidence="2">D-Ala-D-Ala ligase</fullName>
    </alternativeName>
    <alternativeName>
        <fullName evidence="2">D-alanylalanine synthetase</fullName>
    </alternativeName>
</protein>
<organism>
    <name type="scientific">Yersinia pseudotuberculosis serotype IB (strain PB1/+)</name>
    <dbReference type="NCBI Taxonomy" id="502801"/>
    <lineage>
        <taxon>Bacteria</taxon>
        <taxon>Pseudomonadati</taxon>
        <taxon>Pseudomonadota</taxon>
        <taxon>Gammaproteobacteria</taxon>
        <taxon>Enterobacterales</taxon>
        <taxon>Yersiniaceae</taxon>
        <taxon>Yersinia</taxon>
    </lineage>
</organism>
<feature type="chain" id="PRO_1000091217" description="D-alanine--D-alanine ligase">
    <location>
        <begin position="1"/>
        <end position="306"/>
    </location>
</feature>
<feature type="domain" description="ATP-grasp" evidence="2">
    <location>
        <begin position="101"/>
        <end position="303"/>
    </location>
</feature>
<feature type="binding site" evidence="2">
    <location>
        <begin position="134"/>
        <end position="189"/>
    </location>
    <ligand>
        <name>ATP</name>
        <dbReference type="ChEBI" id="CHEBI:30616"/>
    </ligand>
</feature>
<feature type="binding site" evidence="2">
    <location>
        <position position="257"/>
    </location>
    <ligand>
        <name>Mg(2+)</name>
        <dbReference type="ChEBI" id="CHEBI:18420"/>
        <label>1</label>
    </ligand>
</feature>
<feature type="binding site" evidence="2">
    <location>
        <position position="270"/>
    </location>
    <ligand>
        <name>Mg(2+)</name>
        <dbReference type="ChEBI" id="CHEBI:18420"/>
        <label>1</label>
    </ligand>
</feature>
<feature type="binding site" evidence="2">
    <location>
        <position position="270"/>
    </location>
    <ligand>
        <name>Mg(2+)</name>
        <dbReference type="ChEBI" id="CHEBI:18420"/>
        <label>2</label>
    </ligand>
</feature>
<feature type="binding site" evidence="2">
    <location>
        <position position="272"/>
    </location>
    <ligand>
        <name>Mg(2+)</name>
        <dbReference type="ChEBI" id="CHEBI:18420"/>
        <label>2</label>
    </ligand>
</feature>
<sequence length="306" mass="33150">MAEKVAVLLGGTSAEREVSLLSGQAVLAGLKEAGIDAYGVDTKDFPVTQLKEQGFDKVFIALHGRGGEDGTLQGVLEFLQLPYTGSGVMASALTMDKLRTKLVWQALGLPISPYVALNRQQFETLSPEELVACVAKLGLPLIVKPSHEGSSVGMSKVDHASELQKALVEAFQHDSDVLIEKWLSGPEFTVAILGDEVLPSIRIQPPGVFYDYDAKYLSDKTQYFCPSGLSDESEQQLAALALQAYHALDCSGWGRVDVMQDRDGHFYLLEVNTSPGMTSHSLVPMAARQYGLSFSQLVARILMLAD</sequence>
<accession>B2K4E8</accession>
<evidence type="ECO:0000250" key="1"/>
<evidence type="ECO:0000255" key="2">
    <source>
        <dbReference type="HAMAP-Rule" id="MF_00047"/>
    </source>
</evidence>
<proteinExistence type="inferred from homology"/>
<reference key="1">
    <citation type="submission" date="2008-04" db="EMBL/GenBank/DDBJ databases">
        <title>Complete sequence of Yersinia pseudotuberculosis PB1/+.</title>
        <authorList>
            <person name="Copeland A."/>
            <person name="Lucas S."/>
            <person name="Lapidus A."/>
            <person name="Glavina del Rio T."/>
            <person name="Dalin E."/>
            <person name="Tice H."/>
            <person name="Bruce D."/>
            <person name="Goodwin L."/>
            <person name="Pitluck S."/>
            <person name="Munk A.C."/>
            <person name="Brettin T."/>
            <person name="Detter J.C."/>
            <person name="Han C."/>
            <person name="Tapia R."/>
            <person name="Schmutz J."/>
            <person name="Larimer F."/>
            <person name="Land M."/>
            <person name="Hauser L."/>
            <person name="Challacombe J.F."/>
            <person name="Green L."/>
            <person name="Lindler L.E."/>
            <person name="Nikolich M.P."/>
            <person name="Richardson P."/>
        </authorList>
    </citation>
    <scope>NUCLEOTIDE SEQUENCE [LARGE SCALE GENOMIC DNA]</scope>
    <source>
        <strain>PB1/+</strain>
    </source>
</reference>
<gene>
    <name evidence="2" type="primary">ddl</name>
    <name type="ordered locus">YPTS_0717</name>
</gene>
<comment type="function">
    <text evidence="2">Cell wall formation.</text>
</comment>
<comment type="catalytic activity">
    <reaction evidence="2">
        <text>2 D-alanine + ATP = D-alanyl-D-alanine + ADP + phosphate + H(+)</text>
        <dbReference type="Rhea" id="RHEA:11224"/>
        <dbReference type="ChEBI" id="CHEBI:15378"/>
        <dbReference type="ChEBI" id="CHEBI:30616"/>
        <dbReference type="ChEBI" id="CHEBI:43474"/>
        <dbReference type="ChEBI" id="CHEBI:57416"/>
        <dbReference type="ChEBI" id="CHEBI:57822"/>
        <dbReference type="ChEBI" id="CHEBI:456216"/>
        <dbReference type="EC" id="6.3.2.4"/>
    </reaction>
</comment>
<comment type="cofactor">
    <cofactor evidence="1">
        <name>Mg(2+)</name>
        <dbReference type="ChEBI" id="CHEBI:18420"/>
    </cofactor>
    <cofactor evidence="1">
        <name>Mn(2+)</name>
        <dbReference type="ChEBI" id="CHEBI:29035"/>
    </cofactor>
    <text evidence="1">Binds 2 magnesium or manganese ions per subunit.</text>
</comment>
<comment type="pathway">
    <text evidence="2">Cell wall biogenesis; peptidoglycan biosynthesis.</text>
</comment>
<comment type="subcellular location">
    <subcellularLocation>
        <location evidence="2">Cytoplasm</location>
    </subcellularLocation>
</comment>
<comment type="similarity">
    <text evidence="2">Belongs to the D-alanine--D-alanine ligase family.</text>
</comment>
<name>DDL_YERPB</name>